<reference key="1">
    <citation type="submission" date="2007-11" db="EMBL/GenBank/DDBJ databases">
        <authorList>
            <consortium name="The Salmonella enterica serovar Arizonae Genome Sequencing Project"/>
            <person name="McClelland M."/>
            <person name="Sanderson E.K."/>
            <person name="Porwollik S."/>
            <person name="Spieth J."/>
            <person name="Clifton W.S."/>
            <person name="Fulton R."/>
            <person name="Chunyan W."/>
            <person name="Wollam A."/>
            <person name="Shah N."/>
            <person name="Pepin K."/>
            <person name="Bhonagiri V."/>
            <person name="Nash W."/>
            <person name="Johnson M."/>
            <person name="Thiruvilangam P."/>
            <person name="Wilson R."/>
        </authorList>
    </citation>
    <scope>NUCLEOTIDE SEQUENCE [LARGE SCALE GENOMIC DNA]</scope>
    <source>
        <strain>ATCC BAA-731 / CDC346-86 / RSK2980</strain>
    </source>
</reference>
<sequence length="282" mass="32844">MANQLILLKKDFFTDEQQAVTVADRYPQDVFAEHTHEFCELVMVWRGNGLHVLNDRPYRITRGDLFYIRAEDKHSYTSVNDLVLQNIIYCPERLKLNVNWQAMIPGFQGAQWHPHWRLGSMGMNQARQVINQLEHESNGRDPLANEMAELLFGQLVMTLKRHRYATDDLPATSRETLLDKLITALANSLECPFALDAFCQQEQCSERVLRQQFRAQTGMTINQYLRQVRICHAQYLLQHSPLMISEISMQCGFEDSNYFSVVFTRETGMTPSQWRHLSNQSD</sequence>
<evidence type="ECO:0000255" key="1">
    <source>
        <dbReference type="HAMAP-Rule" id="MF_01533"/>
    </source>
</evidence>
<protein>
    <recommendedName>
        <fullName evidence="1">HTH-type transcriptional activator RhaR</fullName>
    </recommendedName>
    <alternativeName>
        <fullName evidence="1">L-rhamnose operon transcriptional activator RhaR</fullName>
    </alternativeName>
</protein>
<organism>
    <name type="scientific">Salmonella arizonae (strain ATCC BAA-731 / CDC346-86 / RSK2980)</name>
    <dbReference type="NCBI Taxonomy" id="41514"/>
    <lineage>
        <taxon>Bacteria</taxon>
        <taxon>Pseudomonadati</taxon>
        <taxon>Pseudomonadota</taxon>
        <taxon>Gammaproteobacteria</taxon>
        <taxon>Enterobacterales</taxon>
        <taxon>Enterobacteriaceae</taxon>
        <taxon>Salmonella</taxon>
    </lineage>
</organism>
<proteinExistence type="inferred from homology"/>
<accession>A9MI63</accession>
<keyword id="KW-0010">Activator</keyword>
<keyword id="KW-0963">Cytoplasm</keyword>
<keyword id="KW-0238">DNA-binding</keyword>
<keyword id="KW-1185">Reference proteome</keyword>
<keyword id="KW-0677">Repeat</keyword>
<keyword id="KW-0684">Rhamnose metabolism</keyword>
<keyword id="KW-0804">Transcription</keyword>
<keyword id="KW-0805">Transcription regulation</keyword>
<name>RHAR_SALAR</name>
<feature type="chain" id="PRO_1000087596" description="HTH-type transcriptional activator RhaR">
    <location>
        <begin position="1"/>
        <end position="282"/>
    </location>
</feature>
<feature type="domain" description="HTH araC/xylS-type" evidence="1">
    <location>
        <begin position="179"/>
        <end position="277"/>
    </location>
</feature>
<feature type="DNA-binding region" description="H-T-H motif" evidence="1">
    <location>
        <begin position="196"/>
        <end position="217"/>
    </location>
</feature>
<feature type="DNA-binding region" description="H-T-H motif" evidence="1">
    <location>
        <begin position="244"/>
        <end position="267"/>
    </location>
</feature>
<feature type="site" description="Interaction with sigma-70" evidence="1">
    <location>
        <position position="246"/>
    </location>
</feature>
<gene>
    <name evidence="1" type="primary">rhaR</name>
    <name type="ordered locus">SARI_03597</name>
</gene>
<comment type="function">
    <text evidence="1">Activates expression of the rhaSR operon in response to L-rhamnose.</text>
</comment>
<comment type="subunit">
    <text evidence="1">Binds DNA as a dimer.</text>
</comment>
<comment type="subcellular location">
    <subcellularLocation>
        <location evidence="1">Cytoplasm</location>
    </subcellularLocation>
</comment>
<dbReference type="EMBL" id="CP000880">
    <property type="protein sequence ID" value="ABX23409.1"/>
    <property type="molecule type" value="Genomic_DNA"/>
</dbReference>
<dbReference type="SMR" id="A9MI63"/>
<dbReference type="STRING" id="41514.SARI_03597"/>
<dbReference type="KEGG" id="ses:SARI_03597"/>
<dbReference type="HOGENOM" id="CLU_000445_88_5_6"/>
<dbReference type="Proteomes" id="UP000002084">
    <property type="component" value="Chromosome"/>
</dbReference>
<dbReference type="GO" id="GO:0005737">
    <property type="term" value="C:cytoplasm"/>
    <property type="evidence" value="ECO:0007669"/>
    <property type="project" value="UniProtKB-SubCell"/>
</dbReference>
<dbReference type="GO" id="GO:0003700">
    <property type="term" value="F:DNA-binding transcription factor activity"/>
    <property type="evidence" value="ECO:0007669"/>
    <property type="project" value="UniProtKB-UniRule"/>
</dbReference>
<dbReference type="GO" id="GO:0043565">
    <property type="term" value="F:sequence-specific DNA binding"/>
    <property type="evidence" value="ECO:0007669"/>
    <property type="project" value="InterPro"/>
</dbReference>
<dbReference type="GO" id="GO:0045893">
    <property type="term" value="P:positive regulation of DNA-templated transcription"/>
    <property type="evidence" value="ECO:0007669"/>
    <property type="project" value="UniProtKB-UniRule"/>
</dbReference>
<dbReference type="GO" id="GO:0019299">
    <property type="term" value="P:rhamnose metabolic process"/>
    <property type="evidence" value="ECO:0007669"/>
    <property type="project" value="UniProtKB-UniRule"/>
</dbReference>
<dbReference type="CDD" id="cd06977">
    <property type="entry name" value="cupin_RhaR_RhaS-like_N"/>
    <property type="match status" value="1"/>
</dbReference>
<dbReference type="Gene3D" id="1.10.10.60">
    <property type="entry name" value="Homeodomain-like"/>
    <property type="match status" value="2"/>
</dbReference>
<dbReference type="Gene3D" id="2.60.120.10">
    <property type="entry name" value="Jelly Rolls"/>
    <property type="match status" value="1"/>
</dbReference>
<dbReference type="HAMAP" id="MF_01533">
    <property type="entry name" value="HTH_type_RhaR"/>
    <property type="match status" value="1"/>
</dbReference>
<dbReference type="InterPro" id="IPR003313">
    <property type="entry name" value="AraC-bd"/>
</dbReference>
<dbReference type="InterPro" id="IPR009057">
    <property type="entry name" value="Homeodomain-like_sf"/>
</dbReference>
<dbReference type="InterPro" id="IPR018060">
    <property type="entry name" value="HTH_AraC"/>
</dbReference>
<dbReference type="InterPro" id="IPR018062">
    <property type="entry name" value="HTH_AraC-typ_CS"/>
</dbReference>
<dbReference type="InterPro" id="IPR047220">
    <property type="entry name" value="RhaR_RhaS-like_N"/>
</dbReference>
<dbReference type="InterPro" id="IPR014710">
    <property type="entry name" value="RmlC-like_jellyroll"/>
</dbReference>
<dbReference type="InterPro" id="IPR011051">
    <property type="entry name" value="RmlC_Cupin_sf"/>
</dbReference>
<dbReference type="InterPro" id="IPR023699">
    <property type="entry name" value="Tscrpt_act_RhaR"/>
</dbReference>
<dbReference type="InterPro" id="IPR020449">
    <property type="entry name" value="Tscrpt_reg_AraC-type_HTH"/>
</dbReference>
<dbReference type="NCBIfam" id="NF010025">
    <property type="entry name" value="PRK13500.1"/>
    <property type="match status" value="1"/>
</dbReference>
<dbReference type="NCBIfam" id="NF010026">
    <property type="entry name" value="PRK13501.1"/>
    <property type="match status" value="1"/>
</dbReference>
<dbReference type="NCBIfam" id="NF010027">
    <property type="entry name" value="PRK13502.1"/>
    <property type="match status" value="1"/>
</dbReference>
<dbReference type="PANTHER" id="PTHR43280">
    <property type="entry name" value="ARAC-FAMILY TRANSCRIPTIONAL REGULATOR"/>
    <property type="match status" value="1"/>
</dbReference>
<dbReference type="PANTHER" id="PTHR43280:SF13">
    <property type="entry name" value="HTH-TYPE TRANSCRIPTIONAL ACTIVATOR RHAR"/>
    <property type="match status" value="1"/>
</dbReference>
<dbReference type="Pfam" id="PF02311">
    <property type="entry name" value="AraC_binding"/>
    <property type="match status" value="1"/>
</dbReference>
<dbReference type="Pfam" id="PF12833">
    <property type="entry name" value="HTH_18"/>
    <property type="match status" value="1"/>
</dbReference>
<dbReference type="PRINTS" id="PR00032">
    <property type="entry name" value="HTHARAC"/>
</dbReference>
<dbReference type="SMART" id="SM00342">
    <property type="entry name" value="HTH_ARAC"/>
    <property type="match status" value="1"/>
</dbReference>
<dbReference type="SUPFAM" id="SSF46689">
    <property type="entry name" value="Homeodomain-like"/>
    <property type="match status" value="1"/>
</dbReference>
<dbReference type="SUPFAM" id="SSF51182">
    <property type="entry name" value="RmlC-like cupins"/>
    <property type="match status" value="1"/>
</dbReference>
<dbReference type="PROSITE" id="PS00041">
    <property type="entry name" value="HTH_ARAC_FAMILY_1"/>
    <property type="match status" value="1"/>
</dbReference>
<dbReference type="PROSITE" id="PS01124">
    <property type="entry name" value="HTH_ARAC_FAMILY_2"/>
    <property type="match status" value="1"/>
</dbReference>